<protein>
    <recommendedName>
        <fullName evidence="1">Preprotein translocase subunit SecG</fullName>
    </recommendedName>
    <alternativeName>
        <fullName evidence="1">Protein transport protein Sec61 subunit beta homolog</fullName>
    </alternativeName>
</protein>
<reference key="1">
    <citation type="journal article" date="2008" name="Genome Biol.">
        <title>A genomic analysis of the archaeal system Ignicoccus hospitalis-Nanoarchaeum equitans.</title>
        <authorList>
            <person name="Podar M."/>
            <person name="Anderson I."/>
            <person name="Makarova K.S."/>
            <person name="Elkins J.G."/>
            <person name="Ivanova N."/>
            <person name="Wall M.A."/>
            <person name="Lykidis A."/>
            <person name="Mavromatis K."/>
            <person name="Sun H."/>
            <person name="Hudson M.E."/>
            <person name="Chen W."/>
            <person name="Deciu C."/>
            <person name="Hutchison D."/>
            <person name="Eads J.R."/>
            <person name="Anderson A."/>
            <person name="Fernandes F."/>
            <person name="Szeto E."/>
            <person name="Lapidus A."/>
            <person name="Kyrpides N.C."/>
            <person name="Saier M.H. Jr."/>
            <person name="Richardson P.M."/>
            <person name="Rachel R."/>
            <person name="Huber H."/>
            <person name="Eisen J.A."/>
            <person name="Koonin E.V."/>
            <person name="Keller M."/>
            <person name="Stetter K.O."/>
        </authorList>
    </citation>
    <scope>NUCLEOTIDE SEQUENCE [LARGE SCALE GENOMIC DNA]</scope>
    <source>
        <strain>KIN4/I / DSM 18386 / JCM 14125</strain>
    </source>
</reference>
<sequence>MARKRRKGGEGLVTAIGLVRFYEEVEEKIKVPPEAVIGAAFALSIMTIALDLLLKAAR</sequence>
<accession>A8ABD7</accession>
<keyword id="KW-1003">Cell membrane</keyword>
<keyword id="KW-0472">Membrane</keyword>
<keyword id="KW-0653">Protein transport</keyword>
<keyword id="KW-1185">Reference proteome</keyword>
<keyword id="KW-0811">Translocation</keyword>
<keyword id="KW-0812">Transmembrane</keyword>
<keyword id="KW-1133">Transmembrane helix</keyword>
<keyword id="KW-0813">Transport</keyword>
<dbReference type="EMBL" id="CP000816">
    <property type="protein sequence ID" value="ABU82239.1"/>
    <property type="molecule type" value="Genomic_DNA"/>
</dbReference>
<dbReference type="RefSeq" id="WP_012123203.1">
    <property type="nucleotide sequence ID" value="NC_009776.1"/>
</dbReference>
<dbReference type="SMR" id="A8ABD7"/>
<dbReference type="STRING" id="453591.Igni_1061"/>
<dbReference type="GeneID" id="32154695"/>
<dbReference type="KEGG" id="iho:Igni_1061"/>
<dbReference type="eggNOG" id="arCOG02957">
    <property type="taxonomic scope" value="Archaea"/>
</dbReference>
<dbReference type="HOGENOM" id="CLU_208205_2_1_2"/>
<dbReference type="Proteomes" id="UP000000262">
    <property type="component" value="Chromosome"/>
</dbReference>
<dbReference type="GO" id="GO:0005886">
    <property type="term" value="C:plasma membrane"/>
    <property type="evidence" value="ECO:0007669"/>
    <property type="project" value="UniProtKB-SubCell"/>
</dbReference>
<dbReference type="GO" id="GO:0015031">
    <property type="term" value="P:protein transport"/>
    <property type="evidence" value="ECO:0007669"/>
    <property type="project" value="UniProtKB-UniRule"/>
</dbReference>
<dbReference type="HAMAP" id="MF_00751">
    <property type="entry name" value="SecG"/>
    <property type="match status" value="1"/>
</dbReference>
<dbReference type="InterPro" id="IPR023531">
    <property type="entry name" value="Preprot_translocase_SecG"/>
</dbReference>
<dbReference type="InterPro" id="IPR016482">
    <property type="entry name" value="SecG/Sec61-beta/Sbh"/>
</dbReference>
<dbReference type="Pfam" id="PF03911">
    <property type="entry name" value="Sec61_beta"/>
    <property type="match status" value="1"/>
</dbReference>
<organism>
    <name type="scientific">Ignicoccus hospitalis (strain KIN4/I / DSM 18386 / JCM 14125)</name>
    <dbReference type="NCBI Taxonomy" id="453591"/>
    <lineage>
        <taxon>Archaea</taxon>
        <taxon>Thermoproteota</taxon>
        <taxon>Thermoprotei</taxon>
        <taxon>Desulfurococcales</taxon>
        <taxon>Desulfurococcaceae</taxon>
        <taxon>Ignicoccus</taxon>
    </lineage>
</organism>
<gene>
    <name evidence="1" type="primary">secG</name>
    <name type="ordered locus">Igni_1061</name>
</gene>
<evidence type="ECO:0000255" key="1">
    <source>
        <dbReference type="HAMAP-Rule" id="MF_00751"/>
    </source>
</evidence>
<name>SECG_IGNH4</name>
<feature type="chain" id="PRO_1000046576" description="Preprotein translocase subunit SecG">
    <location>
        <begin position="1"/>
        <end position="58"/>
    </location>
</feature>
<feature type="topological domain" description="Cytoplasmic" evidence="1">
    <location>
        <begin position="1"/>
        <end position="32"/>
    </location>
</feature>
<feature type="transmembrane region" description="Helical" evidence="1">
    <location>
        <begin position="33"/>
        <end position="54"/>
    </location>
</feature>
<feature type="topological domain" description="Extracellular" evidence="1">
    <location>
        <begin position="55"/>
        <end position="58"/>
    </location>
</feature>
<comment type="function">
    <text evidence="1">Involved in protein export. The function of the beta subunit is unknown, but it may be involved in stabilization of the trimeric complex.</text>
</comment>
<comment type="subunit">
    <text evidence="1">Component of the protein translocase complex. Heterotrimer consisting of alpha (SecY), beta (SecG) and gamma (SecE) subunits. Can form oligomers of the heterotrimer.</text>
</comment>
<comment type="subcellular location">
    <subcellularLocation>
        <location evidence="1">Cell membrane</location>
        <topology evidence="1">Single-pass membrane protein</topology>
    </subcellularLocation>
</comment>
<comment type="similarity">
    <text evidence="1">Belongs to the SEC61-beta family.</text>
</comment>
<proteinExistence type="inferred from homology"/>